<keyword id="KW-0002">3D-structure</keyword>
<keyword id="KW-0963">Cytoplasm</keyword>
<keyword id="KW-0342">GTP-binding</keyword>
<keyword id="KW-0378">Hydrolase</keyword>
<keyword id="KW-0479">Metal-binding</keyword>
<keyword id="KW-0547">Nucleotide-binding</keyword>
<keyword id="KW-0690">Ribosome biogenesis</keyword>
<keyword id="KW-0694">RNA-binding</keyword>
<keyword id="KW-0699">rRNA-binding</keyword>
<keyword id="KW-0862">Zinc</keyword>
<sequence>MKTGRIVKSISGVYQVDVNGERFNTKPRGLFRKKKFSPVVGDIVEFEVQNINEGYIHQVFERENELKRPPVSNIDTLVIVMSAVEPNFSTQLLDRFLVIAHSYQLNARILVTKKDKTPIEKQFEINELLKIYENIGYETEFIGNDDDRKKIVEAWPAGLIVLSGQSGVGKSTFLNHYRPELNLETNDISKSLNRGKHTTRHVELFERQNGYIADTPGFSALDFDHIDKDEIKDYFLELNRYGETCKFRNCNHIKEPNCNVKHQLEIGNIAQFRYDHYLQLFNEISNRKVRY</sequence>
<name>RSGA_STAAC</name>
<dbReference type="EC" id="3.6.1.-" evidence="1"/>
<dbReference type="EMBL" id="Y13639">
    <property type="protein sequence ID" value="CAA73981.1"/>
    <property type="molecule type" value="Genomic_DNA"/>
</dbReference>
<dbReference type="EMBL" id="CP000046">
    <property type="protein sequence ID" value="AAW38069.1"/>
    <property type="molecule type" value="Genomic_DNA"/>
</dbReference>
<dbReference type="RefSeq" id="WP_000847933.1">
    <property type="nucleotide sequence ID" value="NZ_JBGOFO010000002.1"/>
</dbReference>
<dbReference type="PDB" id="6ZJO">
    <property type="method" value="X-ray"/>
    <property type="resolution" value="2.01 A"/>
    <property type="chains" value="A/B=1-291"/>
</dbReference>
<dbReference type="PDBsum" id="6ZJO"/>
<dbReference type="SMR" id="Q9KX08"/>
<dbReference type="KEGG" id="sac:SACOL1234"/>
<dbReference type="HOGENOM" id="CLU_033617_2_1_9"/>
<dbReference type="Proteomes" id="UP000000530">
    <property type="component" value="Chromosome"/>
</dbReference>
<dbReference type="GO" id="GO:0005737">
    <property type="term" value="C:cytoplasm"/>
    <property type="evidence" value="ECO:0007669"/>
    <property type="project" value="UniProtKB-SubCell"/>
</dbReference>
<dbReference type="GO" id="GO:0005525">
    <property type="term" value="F:GTP binding"/>
    <property type="evidence" value="ECO:0007669"/>
    <property type="project" value="UniProtKB-UniRule"/>
</dbReference>
<dbReference type="GO" id="GO:0003924">
    <property type="term" value="F:GTPase activity"/>
    <property type="evidence" value="ECO:0007669"/>
    <property type="project" value="UniProtKB-UniRule"/>
</dbReference>
<dbReference type="GO" id="GO:0046872">
    <property type="term" value="F:metal ion binding"/>
    <property type="evidence" value="ECO:0007669"/>
    <property type="project" value="UniProtKB-KW"/>
</dbReference>
<dbReference type="GO" id="GO:0019843">
    <property type="term" value="F:rRNA binding"/>
    <property type="evidence" value="ECO:0007669"/>
    <property type="project" value="UniProtKB-KW"/>
</dbReference>
<dbReference type="GO" id="GO:0042274">
    <property type="term" value="P:ribosomal small subunit biogenesis"/>
    <property type="evidence" value="ECO:0007669"/>
    <property type="project" value="UniProtKB-UniRule"/>
</dbReference>
<dbReference type="CDD" id="cd04466">
    <property type="entry name" value="S1_YloQ_GTPase"/>
    <property type="match status" value="1"/>
</dbReference>
<dbReference type="CDD" id="cd01854">
    <property type="entry name" value="YjeQ_EngC"/>
    <property type="match status" value="1"/>
</dbReference>
<dbReference type="Gene3D" id="2.40.50.140">
    <property type="entry name" value="Nucleic acid-binding proteins"/>
    <property type="match status" value="1"/>
</dbReference>
<dbReference type="Gene3D" id="3.40.50.300">
    <property type="entry name" value="P-loop containing nucleotide triphosphate hydrolases"/>
    <property type="match status" value="1"/>
</dbReference>
<dbReference type="Gene3D" id="1.10.40.50">
    <property type="entry name" value="Probable gtpase engc, domain 3"/>
    <property type="match status" value="1"/>
</dbReference>
<dbReference type="HAMAP" id="MF_01820">
    <property type="entry name" value="GTPase_RsgA"/>
    <property type="match status" value="1"/>
</dbReference>
<dbReference type="InterPro" id="IPR030378">
    <property type="entry name" value="G_CP_dom"/>
</dbReference>
<dbReference type="InterPro" id="IPR012340">
    <property type="entry name" value="NA-bd_OB-fold"/>
</dbReference>
<dbReference type="InterPro" id="IPR027417">
    <property type="entry name" value="P-loop_NTPase"/>
</dbReference>
<dbReference type="InterPro" id="IPR004881">
    <property type="entry name" value="Ribosome_biogen_GTPase_RsgA"/>
</dbReference>
<dbReference type="InterPro" id="IPR010914">
    <property type="entry name" value="RsgA_GTPase_dom"/>
</dbReference>
<dbReference type="InterPro" id="IPR031944">
    <property type="entry name" value="RsgA_N"/>
</dbReference>
<dbReference type="NCBIfam" id="TIGR00157">
    <property type="entry name" value="ribosome small subunit-dependent GTPase A"/>
    <property type="match status" value="1"/>
</dbReference>
<dbReference type="PANTHER" id="PTHR32120">
    <property type="entry name" value="SMALL RIBOSOMAL SUBUNIT BIOGENESIS GTPASE RSGA"/>
    <property type="match status" value="1"/>
</dbReference>
<dbReference type="PANTHER" id="PTHR32120:SF11">
    <property type="entry name" value="SMALL RIBOSOMAL SUBUNIT BIOGENESIS GTPASE RSGA 1, MITOCHONDRIAL-RELATED"/>
    <property type="match status" value="1"/>
</dbReference>
<dbReference type="Pfam" id="PF03193">
    <property type="entry name" value="RsgA_GTPase"/>
    <property type="match status" value="1"/>
</dbReference>
<dbReference type="Pfam" id="PF16745">
    <property type="entry name" value="RsgA_N"/>
    <property type="match status" value="1"/>
</dbReference>
<dbReference type="SUPFAM" id="SSF50249">
    <property type="entry name" value="Nucleic acid-binding proteins"/>
    <property type="match status" value="1"/>
</dbReference>
<dbReference type="SUPFAM" id="SSF52540">
    <property type="entry name" value="P-loop containing nucleoside triphosphate hydrolases"/>
    <property type="match status" value="1"/>
</dbReference>
<dbReference type="PROSITE" id="PS50936">
    <property type="entry name" value="ENGC_GTPASE"/>
    <property type="match status" value="1"/>
</dbReference>
<dbReference type="PROSITE" id="PS51721">
    <property type="entry name" value="G_CP"/>
    <property type="match status" value="1"/>
</dbReference>
<comment type="function">
    <text evidence="1">One of several proteins that assist in the late maturation steps of the functional core of the 30S ribosomal subunit. Helps release RbfA from mature subunits. May play a role in the assembly of ribosomal proteins into the subunit. Circularly permuted GTPase that catalyzes slow GTP hydrolysis, GTPase activity is stimulated by the 30S ribosomal subunit.</text>
</comment>
<comment type="cofactor">
    <cofactor evidence="1">
        <name>Zn(2+)</name>
        <dbReference type="ChEBI" id="CHEBI:29105"/>
    </cofactor>
    <text evidence="1">Binds 1 zinc ion per subunit.</text>
</comment>
<comment type="subunit">
    <text evidence="1">Monomer. Associates with 30S ribosomal subunit, binds 16S rRNA.</text>
</comment>
<comment type="subcellular location">
    <subcellularLocation>
        <location evidence="1">Cytoplasm</location>
    </subcellularLocation>
</comment>
<comment type="similarity">
    <text evidence="1">Belongs to the TRAFAC class YlqF/YawG GTPase family. RsgA subfamily.</text>
</comment>
<reference key="1">
    <citation type="journal article" date="1999" name="Microb. Drug Resist.">
        <title>Antibiotic resistance as a stress response: complete sequencing of a large number of chromosomal loci in Staphylococcus aureus strain COL that impact on the expression of resistance to methicillin.</title>
        <authorList>
            <person name="de Lencastre H."/>
            <person name="Wu S.-W."/>
            <person name="Pinho M.G."/>
            <person name="Ludovice A.M."/>
            <person name="Filipe S."/>
            <person name="Gardete S."/>
            <person name="Sobral R."/>
            <person name="Gill S.R."/>
            <person name="Chung M."/>
            <person name="Tomasz A."/>
        </authorList>
    </citation>
    <scope>NUCLEOTIDE SEQUENCE [GENOMIC DNA]</scope>
</reference>
<reference key="2">
    <citation type="journal article" date="2005" name="J. Bacteriol.">
        <title>Insights on evolution of virulence and resistance from the complete genome analysis of an early methicillin-resistant Staphylococcus aureus strain and a biofilm-producing methicillin-resistant Staphylococcus epidermidis strain.</title>
        <authorList>
            <person name="Gill S.R."/>
            <person name="Fouts D.E."/>
            <person name="Archer G.L."/>
            <person name="Mongodin E.F."/>
            <person name="DeBoy R.T."/>
            <person name="Ravel J."/>
            <person name="Paulsen I.T."/>
            <person name="Kolonay J.F."/>
            <person name="Brinkac L.M."/>
            <person name="Beanan M.J."/>
            <person name="Dodson R.J."/>
            <person name="Daugherty S.C."/>
            <person name="Madupu R."/>
            <person name="Angiuoli S.V."/>
            <person name="Durkin A.S."/>
            <person name="Haft D.H."/>
            <person name="Vamathevan J.J."/>
            <person name="Khouri H."/>
            <person name="Utterback T.R."/>
            <person name="Lee C."/>
            <person name="Dimitrov G."/>
            <person name="Jiang L."/>
            <person name="Qin H."/>
            <person name="Weidman J."/>
            <person name="Tran K."/>
            <person name="Kang K.H."/>
            <person name="Hance I.R."/>
            <person name="Nelson K.E."/>
            <person name="Fraser C.M."/>
        </authorList>
    </citation>
    <scope>NUCLEOTIDE SEQUENCE [LARGE SCALE GENOMIC DNA]</scope>
    <source>
        <strain>COL</strain>
    </source>
</reference>
<gene>
    <name evidence="1" type="primary">rsgA</name>
    <name type="ordered locus">SACOL1234</name>
</gene>
<accession>Q9KX08</accession>
<proteinExistence type="evidence at protein level"/>
<organism>
    <name type="scientific">Staphylococcus aureus (strain COL)</name>
    <dbReference type="NCBI Taxonomy" id="93062"/>
    <lineage>
        <taxon>Bacteria</taxon>
        <taxon>Bacillati</taxon>
        <taxon>Bacillota</taxon>
        <taxon>Bacilli</taxon>
        <taxon>Bacillales</taxon>
        <taxon>Staphylococcaceae</taxon>
        <taxon>Staphylococcus</taxon>
    </lineage>
</organism>
<feature type="chain" id="PRO_0000171513" description="Small ribosomal subunit biogenesis GTPase RsgA">
    <location>
        <begin position="1"/>
        <end position="291"/>
    </location>
</feature>
<feature type="domain" description="CP-type G" evidence="2">
    <location>
        <begin position="63"/>
        <end position="221"/>
    </location>
</feature>
<feature type="binding site" evidence="1">
    <location>
        <begin position="112"/>
        <end position="115"/>
    </location>
    <ligand>
        <name>GTP</name>
        <dbReference type="ChEBI" id="CHEBI:37565"/>
    </ligand>
</feature>
<feature type="binding site" evidence="1">
    <location>
        <begin position="164"/>
        <end position="172"/>
    </location>
    <ligand>
        <name>GTP</name>
        <dbReference type="ChEBI" id="CHEBI:37565"/>
    </ligand>
</feature>
<feature type="binding site" evidence="1">
    <location>
        <position position="245"/>
    </location>
    <ligand>
        <name>Zn(2+)</name>
        <dbReference type="ChEBI" id="CHEBI:29105"/>
    </ligand>
</feature>
<feature type="binding site" evidence="1">
    <location>
        <position position="250"/>
    </location>
    <ligand>
        <name>Zn(2+)</name>
        <dbReference type="ChEBI" id="CHEBI:29105"/>
    </ligand>
</feature>
<feature type="binding site" evidence="1">
    <location>
        <position position="252"/>
    </location>
    <ligand>
        <name>Zn(2+)</name>
        <dbReference type="ChEBI" id="CHEBI:29105"/>
    </ligand>
</feature>
<feature type="binding site" evidence="1">
    <location>
        <position position="258"/>
    </location>
    <ligand>
        <name>Zn(2+)</name>
        <dbReference type="ChEBI" id="CHEBI:29105"/>
    </ligand>
</feature>
<feature type="strand" evidence="3">
    <location>
        <begin position="2"/>
        <end position="10"/>
    </location>
</feature>
<feature type="strand" evidence="3">
    <location>
        <begin position="13"/>
        <end position="18"/>
    </location>
</feature>
<feature type="strand" evidence="3">
    <location>
        <begin position="21"/>
        <end position="27"/>
    </location>
</feature>
<feature type="strand" evidence="3">
    <location>
        <begin position="43"/>
        <end position="49"/>
    </location>
</feature>
<feature type="turn" evidence="3">
    <location>
        <begin position="50"/>
        <end position="52"/>
    </location>
</feature>
<feature type="strand" evidence="3">
    <location>
        <begin position="53"/>
        <end position="59"/>
    </location>
</feature>
<feature type="turn" evidence="3">
    <location>
        <begin position="67"/>
        <end position="70"/>
    </location>
</feature>
<feature type="strand" evidence="3">
    <location>
        <begin position="75"/>
        <end position="83"/>
    </location>
</feature>
<feature type="turn" evidence="3">
    <location>
        <begin position="84"/>
        <end position="87"/>
    </location>
</feature>
<feature type="helix" evidence="3">
    <location>
        <begin position="90"/>
        <end position="102"/>
    </location>
</feature>
<feature type="strand" evidence="3">
    <location>
        <begin position="107"/>
        <end position="112"/>
    </location>
</feature>
<feature type="helix" evidence="3">
    <location>
        <begin position="114"/>
        <end position="116"/>
    </location>
</feature>
<feature type="helix" evidence="3">
    <location>
        <begin position="119"/>
        <end position="135"/>
    </location>
</feature>
<feature type="strand" evidence="3">
    <location>
        <begin position="139"/>
        <end position="141"/>
    </location>
</feature>
<feature type="helix" evidence="3">
    <location>
        <begin position="148"/>
        <end position="154"/>
    </location>
</feature>
<feature type="strand" evidence="3">
    <location>
        <begin position="157"/>
        <end position="163"/>
    </location>
</feature>
<feature type="helix" evidence="3">
    <location>
        <begin position="170"/>
        <end position="174"/>
    </location>
</feature>
<feature type="turn" evidence="3">
    <location>
        <begin position="175"/>
        <end position="177"/>
    </location>
</feature>
<feature type="strand" evidence="3">
    <location>
        <begin position="204"/>
        <end position="207"/>
    </location>
</feature>
<feature type="strand" evidence="3">
    <location>
        <begin position="210"/>
        <end position="215"/>
    </location>
</feature>
<feature type="strand" evidence="3">
    <location>
        <begin position="217"/>
        <end position="220"/>
    </location>
</feature>
<feature type="helix" evidence="3">
    <location>
        <begin position="228"/>
        <end position="230"/>
    </location>
</feature>
<feature type="helix" evidence="3">
    <location>
        <begin position="231"/>
        <end position="234"/>
    </location>
</feature>
<feature type="helix" evidence="3">
    <location>
        <begin position="236"/>
        <end position="241"/>
    </location>
</feature>
<feature type="helix" evidence="3">
    <location>
        <begin position="242"/>
        <end position="244"/>
    </location>
</feature>
<feature type="strand" evidence="3">
    <location>
        <begin position="252"/>
        <end position="254"/>
    </location>
</feature>
<feature type="helix" evidence="3">
    <location>
        <begin position="259"/>
        <end position="265"/>
    </location>
</feature>
<feature type="helix" evidence="3">
    <location>
        <begin position="271"/>
        <end position="285"/>
    </location>
</feature>
<evidence type="ECO:0000255" key="1">
    <source>
        <dbReference type="HAMAP-Rule" id="MF_01820"/>
    </source>
</evidence>
<evidence type="ECO:0000255" key="2">
    <source>
        <dbReference type="PROSITE-ProRule" id="PRU01058"/>
    </source>
</evidence>
<evidence type="ECO:0007829" key="3">
    <source>
        <dbReference type="PDB" id="6ZJO"/>
    </source>
</evidence>
<protein>
    <recommendedName>
        <fullName evidence="1">Small ribosomal subunit biogenesis GTPase RsgA</fullName>
        <ecNumber evidence="1">3.6.1.-</ecNumber>
    </recommendedName>
</protein>